<sequence length="419" mass="46376">MSGAARAGPARLAALALLTCSLWPTRADNASQEYYTALINVTVQEPGRGTPLTFRIDRGRYGLDSPKAEVRGQVLAPLPIHGVADHLGCDPQTRFFVPPNIKQWIALLQRGNCTFKEKISRAAFHNAVAVVIYNNKSKEEPVTMTHPGTGDIIAVMITELRGKDILSYLEKNISVQMTIAVGTRMPPKNFSRGSLVFVSISFIVLMIISSAWLIFYFIQKIRYTNARDRNQRRLGDAAKKAISKLTTRTVKKGDKETDPDFDHCAVCIESYKQNDVVRVLPCKHVFHKSCVDPWLSEHCTCPMCKLNILKALGIVPNLPCTDNVAFDMERLTRTQAVNRRAALGDLAGDSSLGLEPLRTSGISPLPQDGELTPRTGEINIAVTKEWFIIASFGLLSALTLCYMIIRATASLNANEVEWF</sequence>
<reference key="1">
    <citation type="journal article" date="2000" name="Gene">
        <title>Cloning of murine G1RP, a novel gene related to Drosophila melanogaster g1.</title>
        <authorList>
            <person name="Baker S.J."/>
            <person name="Reddy E.P."/>
        </authorList>
    </citation>
    <scope>NUCLEOTIDE SEQUENCE [MRNA]</scope>
    <scope>FUNCTION</scope>
    <scope>TISSUE SPECIFICITY</scope>
    <scope>INDUCTION</scope>
</reference>
<reference key="2">
    <citation type="journal article" date="2009" name="PLoS Biol.">
        <title>Lineage-specific biology revealed by a finished genome assembly of the mouse.</title>
        <authorList>
            <person name="Church D.M."/>
            <person name="Goodstadt L."/>
            <person name="Hillier L.W."/>
            <person name="Zody M.C."/>
            <person name="Goldstein S."/>
            <person name="She X."/>
            <person name="Bult C.J."/>
            <person name="Agarwala R."/>
            <person name="Cherry J.L."/>
            <person name="DiCuccio M."/>
            <person name="Hlavina W."/>
            <person name="Kapustin Y."/>
            <person name="Meric P."/>
            <person name="Maglott D."/>
            <person name="Birtle Z."/>
            <person name="Marques A.C."/>
            <person name="Graves T."/>
            <person name="Zhou S."/>
            <person name="Teague B."/>
            <person name="Potamousis K."/>
            <person name="Churas C."/>
            <person name="Place M."/>
            <person name="Herschleb J."/>
            <person name="Runnheim R."/>
            <person name="Forrest D."/>
            <person name="Amos-Landgraf J."/>
            <person name="Schwartz D.C."/>
            <person name="Cheng Z."/>
            <person name="Lindblad-Toh K."/>
            <person name="Eichler E.E."/>
            <person name="Ponting C.P."/>
        </authorList>
    </citation>
    <scope>NUCLEOTIDE SEQUENCE [LARGE SCALE GENOMIC DNA]</scope>
    <source>
        <strain>C57BL/6J</strain>
    </source>
</reference>
<reference key="3">
    <citation type="journal article" date="2004" name="Genome Res.">
        <title>The status, quality, and expansion of the NIH full-length cDNA project: the Mammalian Gene Collection (MGC).</title>
        <authorList>
            <consortium name="The MGC Project Team"/>
        </authorList>
    </citation>
    <scope>NUCLEOTIDE SEQUENCE [LARGE SCALE MRNA]</scope>
    <source>
        <strain evidence="8">Czech II</strain>
        <tissue evidence="8">Mammary gland</tissue>
        <tissue evidence="9">Olfactory epithelium</tissue>
    </source>
</reference>
<dbReference type="EC" id="2.3.2.27" evidence="2"/>
<dbReference type="EMBL" id="AF171875">
    <property type="protein sequence ID" value="AAF05310.1"/>
    <property type="molecule type" value="mRNA"/>
</dbReference>
<dbReference type="EMBL" id="AL627187">
    <property type="status" value="NOT_ANNOTATED_CDS"/>
    <property type="molecule type" value="Genomic_DNA"/>
</dbReference>
<dbReference type="EMBL" id="AL645913">
    <property type="status" value="NOT_ANNOTATED_CDS"/>
    <property type="molecule type" value="Genomic_DNA"/>
</dbReference>
<dbReference type="EMBL" id="BC018199">
    <property type="protein sequence ID" value="AAH18199.1"/>
    <property type="molecule type" value="mRNA"/>
</dbReference>
<dbReference type="EMBL" id="BC048901">
    <property type="protein sequence ID" value="AAH48901.2"/>
    <property type="molecule type" value="mRNA"/>
</dbReference>
<dbReference type="CCDS" id="CCDS24626.1"/>
<dbReference type="RefSeq" id="NP_001277678.1">
    <property type="nucleotide sequence ID" value="NM_001290749.1"/>
</dbReference>
<dbReference type="RefSeq" id="NP_001277679.1">
    <property type="nucleotide sequence ID" value="NM_001290750.1"/>
</dbReference>
<dbReference type="RefSeq" id="NP_067515.2">
    <property type="nucleotide sequence ID" value="NM_021540.4"/>
</dbReference>
<dbReference type="SMR" id="Q8VEM1"/>
<dbReference type="BioGRID" id="208508">
    <property type="interactions" value="2"/>
</dbReference>
<dbReference type="FunCoup" id="Q8VEM1">
    <property type="interactions" value="788"/>
</dbReference>
<dbReference type="STRING" id="10090.ENSMUSP00000099837"/>
<dbReference type="GlyConnect" id="2271">
    <property type="glycosylation" value="4 N-Linked glycans (1 site)"/>
</dbReference>
<dbReference type="GlyCosmos" id="Q8VEM1">
    <property type="glycosylation" value="6 sites, 4 glycans"/>
</dbReference>
<dbReference type="GlyGen" id="Q8VEM1">
    <property type="glycosylation" value="6 sites, 7 N-linked glycans (3 sites)"/>
</dbReference>
<dbReference type="iPTMnet" id="Q8VEM1"/>
<dbReference type="PhosphoSitePlus" id="Q8VEM1"/>
<dbReference type="PaxDb" id="10090-ENSMUSP00000099837"/>
<dbReference type="ProteomicsDB" id="271029"/>
<dbReference type="Antibodypedia" id="2993">
    <property type="antibodies" value="106 antibodies from 23 providers"/>
</dbReference>
<dbReference type="DNASU" id="59044"/>
<dbReference type="Ensembl" id="ENSMUST00000102776.5">
    <property type="protein sequence ID" value="ENSMUSP00000099837.5"/>
    <property type="gene ID" value="ENSMUSG00000020376.18"/>
</dbReference>
<dbReference type="GeneID" id="59044"/>
<dbReference type="KEGG" id="mmu:59044"/>
<dbReference type="UCSC" id="uc007irl.2">
    <property type="organism name" value="mouse"/>
</dbReference>
<dbReference type="AGR" id="MGI:1891717"/>
<dbReference type="CTD" id="55819"/>
<dbReference type="MGI" id="MGI:1891717">
    <property type="gene designation" value="Rnf130"/>
</dbReference>
<dbReference type="VEuPathDB" id="HostDB:ENSMUSG00000020376"/>
<dbReference type="eggNOG" id="KOG0800">
    <property type="taxonomic scope" value="Eukaryota"/>
</dbReference>
<dbReference type="GeneTree" id="ENSGT00940000157465"/>
<dbReference type="InParanoid" id="Q8VEM1"/>
<dbReference type="OMA" id="FCLVADH"/>
<dbReference type="OrthoDB" id="5357315at2759"/>
<dbReference type="PhylomeDB" id="Q8VEM1"/>
<dbReference type="TreeFam" id="TF317486"/>
<dbReference type="Reactome" id="R-MMU-983168">
    <property type="pathway name" value="Antigen processing: Ubiquitination &amp; Proteasome degradation"/>
</dbReference>
<dbReference type="UniPathway" id="UPA00143"/>
<dbReference type="BioGRID-ORCS" id="59044">
    <property type="hits" value="2 hits in 78 CRISPR screens"/>
</dbReference>
<dbReference type="ChiTaRS" id="Rnf130">
    <property type="organism name" value="mouse"/>
</dbReference>
<dbReference type="PRO" id="PR:Q8VEM1"/>
<dbReference type="Proteomes" id="UP000000589">
    <property type="component" value="Chromosome 11"/>
</dbReference>
<dbReference type="RNAct" id="Q8VEM1">
    <property type="molecule type" value="protein"/>
</dbReference>
<dbReference type="Bgee" id="ENSMUSG00000020376">
    <property type="expression patterns" value="Expressed in granulocyte and 263 other cell types or tissues"/>
</dbReference>
<dbReference type="ExpressionAtlas" id="Q8VEM1">
    <property type="expression patterns" value="baseline and differential"/>
</dbReference>
<dbReference type="GO" id="GO:0005737">
    <property type="term" value="C:cytoplasm"/>
    <property type="evidence" value="ECO:0000250"/>
    <property type="project" value="UniProtKB"/>
</dbReference>
<dbReference type="GO" id="GO:0016020">
    <property type="term" value="C:membrane"/>
    <property type="evidence" value="ECO:0000303"/>
    <property type="project" value="UniProtKB"/>
</dbReference>
<dbReference type="GO" id="GO:0004842">
    <property type="term" value="F:ubiquitin-protein transferase activity"/>
    <property type="evidence" value="ECO:0000250"/>
    <property type="project" value="UniProtKB"/>
</dbReference>
<dbReference type="GO" id="GO:0008270">
    <property type="term" value="F:zinc ion binding"/>
    <property type="evidence" value="ECO:0007669"/>
    <property type="project" value="UniProtKB-KW"/>
</dbReference>
<dbReference type="GO" id="GO:0006915">
    <property type="term" value="P:apoptotic process"/>
    <property type="evidence" value="ECO:0007669"/>
    <property type="project" value="UniProtKB-KW"/>
</dbReference>
<dbReference type="GO" id="GO:0012501">
    <property type="term" value="P:programmed cell death"/>
    <property type="evidence" value="ECO:0000315"/>
    <property type="project" value="UniProtKB"/>
</dbReference>
<dbReference type="GO" id="GO:0016567">
    <property type="term" value="P:protein ubiquitination"/>
    <property type="evidence" value="ECO:0007669"/>
    <property type="project" value="UniProtKB-UniPathway"/>
</dbReference>
<dbReference type="CDD" id="cd02122">
    <property type="entry name" value="PA_GRAIL_like"/>
    <property type="match status" value="1"/>
</dbReference>
<dbReference type="CDD" id="cd16803">
    <property type="entry name" value="RING-H2_RNF130"/>
    <property type="match status" value="1"/>
</dbReference>
<dbReference type="FunFam" id="3.30.40.10:FF:000009">
    <property type="entry name" value="E3 ubiquitin-protein ligase RNF130"/>
    <property type="match status" value="1"/>
</dbReference>
<dbReference type="FunFam" id="3.50.30.30:FF:000011">
    <property type="entry name" value="E3 ubiquitin-protein ligase RNF130"/>
    <property type="match status" value="1"/>
</dbReference>
<dbReference type="Gene3D" id="3.50.30.30">
    <property type="match status" value="1"/>
</dbReference>
<dbReference type="Gene3D" id="3.30.40.10">
    <property type="entry name" value="Zinc/RING finger domain, C3HC4 (zinc finger)"/>
    <property type="match status" value="1"/>
</dbReference>
<dbReference type="InterPro" id="IPR046450">
    <property type="entry name" value="PA_dom_sf"/>
</dbReference>
<dbReference type="InterPro" id="IPR003137">
    <property type="entry name" value="PA_domain"/>
</dbReference>
<dbReference type="InterPro" id="IPR051834">
    <property type="entry name" value="RING_finger_E3_ligase"/>
</dbReference>
<dbReference type="InterPro" id="IPR001841">
    <property type="entry name" value="Znf_RING"/>
</dbReference>
<dbReference type="InterPro" id="IPR013083">
    <property type="entry name" value="Znf_RING/FYVE/PHD"/>
</dbReference>
<dbReference type="PANTHER" id="PTHR45931:SF21">
    <property type="entry name" value="RING FINGER PROTEIN 130"/>
    <property type="match status" value="1"/>
</dbReference>
<dbReference type="PANTHER" id="PTHR45931">
    <property type="entry name" value="SI:CH211-59O9.10"/>
    <property type="match status" value="1"/>
</dbReference>
<dbReference type="Pfam" id="PF02225">
    <property type="entry name" value="PA"/>
    <property type="match status" value="1"/>
</dbReference>
<dbReference type="Pfam" id="PF13639">
    <property type="entry name" value="zf-RING_2"/>
    <property type="match status" value="1"/>
</dbReference>
<dbReference type="SMART" id="SM00184">
    <property type="entry name" value="RING"/>
    <property type="match status" value="1"/>
</dbReference>
<dbReference type="SUPFAM" id="SSF52025">
    <property type="entry name" value="PA domain"/>
    <property type="match status" value="1"/>
</dbReference>
<dbReference type="SUPFAM" id="SSF57850">
    <property type="entry name" value="RING/U-box"/>
    <property type="match status" value="1"/>
</dbReference>
<dbReference type="PROSITE" id="PS50089">
    <property type="entry name" value="ZF_RING_2"/>
    <property type="match status" value="1"/>
</dbReference>
<accession>Q8VEM1</accession>
<accession>Q80VL7</accession>
<accession>Q9QZQ6</accession>
<keyword id="KW-0053">Apoptosis</keyword>
<keyword id="KW-0963">Cytoplasm</keyword>
<keyword id="KW-0325">Glycoprotein</keyword>
<keyword id="KW-0472">Membrane</keyword>
<keyword id="KW-0479">Metal-binding</keyword>
<keyword id="KW-1185">Reference proteome</keyword>
<keyword id="KW-0732">Signal</keyword>
<keyword id="KW-0808">Transferase</keyword>
<keyword id="KW-0812">Transmembrane</keyword>
<keyword id="KW-1133">Transmembrane helix</keyword>
<keyword id="KW-0833">Ubl conjugation pathway</keyword>
<keyword id="KW-0862">Zinc</keyword>
<keyword id="KW-0863">Zinc-finger</keyword>
<name>GOLI_MOUSE</name>
<feature type="signal peptide" evidence="3">
    <location>
        <begin position="1"/>
        <end position="27"/>
    </location>
</feature>
<feature type="chain" id="PRO_0000030719" description="E3 ubiquitin-protein ligase RNF130">
    <location>
        <begin position="28"/>
        <end position="419"/>
    </location>
</feature>
<feature type="topological domain" description="Extracellular" evidence="3">
    <location>
        <begin position="28"/>
        <end position="194"/>
    </location>
</feature>
<feature type="transmembrane region" description="Helical" evidence="3">
    <location>
        <begin position="195"/>
        <end position="217"/>
    </location>
</feature>
<feature type="topological domain" description="Cytoplasmic" evidence="3">
    <location>
        <begin position="218"/>
        <end position="419"/>
    </location>
</feature>
<feature type="domain" description="PA">
    <location>
        <begin position="105"/>
        <end position="176"/>
    </location>
</feature>
<feature type="zinc finger region" description="RING-type" evidence="4">
    <location>
        <begin position="264"/>
        <end position="305"/>
    </location>
</feature>
<feature type="glycosylation site" description="N-linked (GlcNAc...) asparagine" evidence="3">
    <location>
        <position position="29"/>
    </location>
</feature>
<feature type="glycosylation site" description="N-linked (GlcNAc...) asparagine" evidence="3">
    <location>
        <position position="40"/>
    </location>
</feature>
<feature type="glycosylation site" description="N-linked (GlcNAc...) asparagine" evidence="3">
    <location>
        <position position="112"/>
    </location>
</feature>
<feature type="glycosylation site" description="N-linked (GlcNAc...) asparagine" evidence="3">
    <location>
        <position position="135"/>
    </location>
</feature>
<feature type="glycosylation site" description="N-linked (GlcNAc...) asparagine" evidence="3">
    <location>
        <position position="172"/>
    </location>
</feature>
<feature type="glycosylation site" description="N-linked (GlcNAc...) asparagine" evidence="3">
    <location>
        <position position="189"/>
    </location>
</feature>
<feature type="sequence conflict" description="In Ref. 1; AAF05310." evidence="6" ref="1">
    <original>K</original>
    <variation>R</variation>
    <location>
        <position position="310"/>
    </location>
</feature>
<protein>
    <recommendedName>
        <fullName>E3 ubiquitin-protein ligase RNF130</fullName>
        <ecNumber evidence="2">2.3.2.27</ecNumber>
    </recommendedName>
    <alternativeName>
        <fullName>G1-related zinc finger protein</fullName>
    </alternativeName>
    <alternativeName>
        <fullName>Goliath homolog</fullName>
    </alternativeName>
    <alternativeName>
        <fullName>RING finger protein 130</fullName>
    </alternativeName>
    <alternativeName>
        <fullName evidence="6">RING-type E3 ubiquitin transferase RNF130</fullName>
    </alternativeName>
</protein>
<evidence type="ECO:0000250" key="1"/>
<evidence type="ECO:0000250" key="2">
    <source>
        <dbReference type="UniProtKB" id="Q86XS8"/>
    </source>
</evidence>
<evidence type="ECO:0000255" key="3"/>
<evidence type="ECO:0000255" key="4">
    <source>
        <dbReference type="PROSITE-ProRule" id="PRU00175"/>
    </source>
</evidence>
<evidence type="ECO:0000269" key="5">
    <source>
    </source>
</evidence>
<evidence type="ECO:0000305" key="6"/>
<evidence type="ECO:0000312" key="7">
    <source>
        <dbReference type="EMBL" id="AAF05310.1"/>
    </source>
</evidence>
<evidence type="ECO:0000312" key="8">
    <source>
        <dbReference type="EMBL" id="AAH18199.1"/>
    </source>
</evidence>
<evidence type="ECO:0000312" key="9">
    <source>
        <dbReference type="EMBL" id="AAH48901.2"/>
    </source>
</evidence>
<gene>
    <name evidence="8" type="primary">Rnf130</name>
    <name evidence="7" type="synonym">G1rp</name>
</gene>
<proteinExistence type="evidence at transcript level"/>
<comment type="function">
    <text evidence="1 5">Acts as an E3 ubiquitin-protein ligase (By similarity). May have a role during the programmed cell death of hematopoietic cells.</text>
</comment>
<comment type="catalytic activity">
    <reaction evidence="2">
        <text>S-ubiquitinyl-[E2 ubiquitin-conjugating enzyme]-L-cysteine + [acceptor protein]-L-lysine = [E2 ubiquitin-conjugating enzyme]-L-cysteine + N(6)-ubiquitinyl-[acceptor protein]-L-lysine.</text>
        <dbReference type="EC" id="2.3.2.27"/>
    </reaction>
</comment>
<comment type="pathway">
    <text>Protein modification; protein ubiquitination.</text>
</comment>
<comment type="subcellular location">
    <subcellularLocation>
        <location evidence="6">Membrane</location>
        <topology evidence="6">Single-pass type I membrane protein</topology>
    </subcellularLocation>
    <subcellularLocation>
        <location evidence="2">Cytoplasm</location>
    </subcellularLocation>
</comment>
<comment type="tissue specificity">
    <text evidence="5">Expression is highest in liver, with lesser amounts in the lung, spleen, brain, heart, kidney and testis.</text>
</comment>
<comment type="induction">
    <text evidence="5">Up-regulated in response to interleukin-3 (IL-3) withdrawal-induced apoptosis of 32Dcl3 cells (derived from bone marrow).</text>
</comment>
<organism>
    <name type="scientific">Mus musculus</name>
    <name type="common">Mouse</name>
    <dbReference type="NCBI Taxonomy" id="10090"/>
    <lineage>
        <taxon>Eukaryota</taxon>
        <taxon>Metazoa</taxon>
        <taxon>Chordata</taxon>
        <taxon>Craniata</taxon>
        <taxon>Vertebrata</taxon>
        <taxon>Euteleostomi</taxon>
        <taxon>Mammalia</taxon>
        <taxon>Eutheria</taxon>
        <taxon>Euarchontoglires</taxon>
        <taxon>Glires</taxon>
        <taxon>Rodentia</taxon>
        <taxon>Myomorpha</taxon>
        <taxon>Muroidea</taxon>
        <taxon>Muridae</taxon>
        <taxon>Murinae</taxon>
        <taxon>Mus</taxon>
        <taxon>Mus</taxon>
    </lineage>
</organism>